<dbReference type="EC" id="1.7.2.-" evidence="3"/>
<dbReference type="EMBL" id="U47143">
    <property type="protein sequence ID" value="AAA97887.1"/>
    <property type="molecule type" value="Genomic_DNA"/>
</dbReference>
<dbReference type="EMBL" id="BT096529">
    <property type="protein sequence ID" value="ACU20737.1"/>
    <property type="molecule type" value="mRNA"/>
</dbReference>
<dbReference type="EMBL" id="CM000844">
    <property type="protein sequence ID" value="KRH29530.1"/>
    <property type="molecule type" value="Genomic_DNA"/>
</dbReference>
<dbReference type="PIR" id="T06785">
    <property type="entry name" value="T06785"/>
</dbReference>
<dbReference type="RefSeq" id="XP_006590912.1">
    <property type="nucleotide sequence ID" value="XM_006590849.2"/>
</dbReference>
<dbReference type="SMR" id="Q42785"/>
<dbReference type="FunCoup" id="Q42785">
    <property type="interactions" value="43"/>
</dbReference>
<dbReference type="STRING" id="3847.Q42785"/>
<dbReference type="PaxDb" id="3847-GLYMA11G12980.1"/>
<dbReference type="EnsemblPlants" id="KRH29530">
    <property type="protein sequence ID" value="KRH29530"/>
    <property type="gene ID" value="GLYMA_11G121800"/>
</dbReference>
<dbReference type="Gramene" id="KRH29530">
    <property type="protein sequence ID" value="KRH29530"/>
    <property type="gene ID" value="GLYMA_11G121800"/>
</dbReference>
<dbReference type="eggNOG" id="KOG3378">
    <property type="taxonomic scope" value="Eukaryota"/>
</dbReference>
<dbReference type="HOGENOM" id="CLU_003827_11_2_1"/>
<dbReference type="InParanoid" id="Q42785"/>
<dbReference type="OMA" id="MRQGYQD"/>
<dbReference type="OrthoDB" id="436496at2759"/>
<dbReference type="Proteomes" id="UP000008827">
    <property type="component" value="Chromosome 11"/>
</dbReference>
<dbReference type="GO" id="GO:0005737">
    <property type="term" value="C:cytoplasm"/>
    <property type="evidence" value="ECO:0007669"/>
    <property type="project" value="UniProtKB-SubCell"/>
</dbReference>
<dbReference type="GO" id="GO:0005634">
    <property type="term" value="C:nucleus"/>
    <property type="evidence" value="ECO:0007669"/>
    <property type="project" value="UniProtKB-SubCell"/>
</dbReference>
<dbReference type="GO" id="GO:0020037">
    <property type="term" value="F:heme binding"/>
    <property type="evidence" value="ECO:0007669"/>
    <property type="project" value="InterPro"/>
</dbReference>
<dbReference type="GO" id="GO:0046872">
    <property type="term" value="F:metal ion binding"/>
    <property type="evidence" value="ECO:0007669"/>
    <property type="project" value="UniProtKB-KW"/>
</dbReference>
<dbReference type="GO" id="GO:0016491">
    <property type="term" value="F:oxidoreductase activity"/>
    <property type="evidence" value="ECO:0007669"/>
    <property type="project" value="UniProtKB-KW"/>
</dbReference>
<dbReference type="GO" id="GO:0019825">
    <property type="term" value="F:oxygen binding"/>
    <property type="evidence" value="ECO:0007669"/>
    <property type="project" value="InterPro"/>
</dbReference>
<dbReference type="GO" id="GO:0005344">
    <property type="term" value="F:oxygen carrier activity"/>
    <property type="evidence" value="ECO:0007669"/>
    <property type="project" value="UniProtKB-KW"/>
</dbReference>
<dbReference type="GO" id="GO:0009413">
    <property type="term" value="P:response to flooding"/>
    <property type="evidence" value="ECO:0000314"/>
    <property type="project" value="UniProtKB"/>
</dbReference>
<dbReference type="GO" id="GO:0009414">
    <property type="term" value="P:response to water deprivation"/>
    <property type="evidence" value="ECO:0000270"/>
    <property type="project" value="UniProtKB"/>
</dbReference>
<dbReference type="CDD" id="cd14784">
    <property type="entry name" value="class1_nsHb-like"/>
    <property type="match status" value="1"/>
</dbReference>
<dbReference type="Gene3D" id="1.10.490.10">
    <property type="entry name" value="Globins"/>
    <property type="match status" value="1"/>
</dbReference>
<dbReference type="InterPro" id="IPR000971">
    <property type="entry name" value="Globin"/>
</dbReference>
<dbReference type="InterPro" id="IPR009050">
    <property type="entry name" value="Globin-like_sf"/>
</dbReference>
<dbReference type="InterPro" id="IPR012292">
    <property type="entry name" value="Globin/Proto"/>
</dbReference>
<dbReference type="InterPro" id="IPR001032">
    <property type="entry name" value="Leghaemoglobin-like"/>
</dbReference>
<dbReference type="InterPro" id="IPR019824">
    <property type="entry name" value="Leghaemoglobin_Fe_BS"/>
</dbReference>
<dbReference type="PANTHER" id="PTHR22924">
    <property type="entry name" value="LEGHEMOGLOBIN-RELATED"/>
    <property type="match status" value="1"/>
</dbReference>
<dbReference type="PANTHER" id="PTHR22924:SF39">
    <property type="entry name" value="NON-SYMBIOTIC HEMOGLOBIN 1"/>
    <property type="match status" value="1"/>
</dbReference>
<dbReference type="Pfam" id="PF00042">
    <property type="entry name" value="Globin"/>
    <property type="match status" value="1"/>
</dbReference>
<dbReference type="PRINTS" id="PR00188">
    <property type="entry name" value="PLANTGLOBIN"/>
</dbReference>
<dbReference type="SUPFAM" id="SSF46458">
    <property type="entry name" value="Globin-like"/>
    <property type="match status" value="1"/>
</dbReference>
<dbReference type="PROSITE" id="PS01033">
    <property type="entry name" value="GLOBIN"/>
    <property type="match status" value="1"/>
</dbReference>
<dbReference type="PROSITE" id="PS00208">
    <property type="entry name" value="PLANT_GLOBIN"/>
    <property type="match status" value="1"/>
</dbReference>
<gene>
    <name evidence="10" type="primary">HB2</name>
    <name evidence="11" type="synonym">GLB1-2</name>
    <name evidence="13" type="ordered locus">Glyma_11G121800</name>
</gene>
<organism>
    <name type="scientific">Glycine max</name>
    <name type="common">Soybean</name>
    <name type="synonym">Glycine hispida</name>
    <dbReference type="NCBI Taxonomy" id="3847"/>
    <lineage>
        <taxon>Eukaryota</taxon>
        <taxon>Viridiplantae</taxon>
        <taxon>Streptophyta</taxon>
        <taxon>Embryophyta</taxon>
        <taxon>Tracheophyta</taxon>
        <taxon>Spermatophyta</taxon>
        <taxon>Magnoliopsida</taxon>
        <taxon>eudicotyledons</taxon>
        <taxon>Gunneridae</taxon>
        <taxon>Pentapetalae</taxon>
        <taxon>rosids</taxon>
        <taxon>fabids</taxon>
        <taxon>Fabales</taxon>
        <taxon>Fabaceae</taxon>
        <taxon>Papilionoideae</taxon>
        <taxon>50 kb inversion clade</taxon>
        <taxon>NPAAA clade</taxon>
        <taxon>indigoferoid/millettioid clade</taxon>
        <taxon>Phaseoleae</taxon>
        <taxon>Glycine</taxon>
        <taxon>Glycine subgen. Soja</taxon>
    </lineage>
</organism>
<keyword id="KW-0963">Cytoplasm</keyword>
<keyword id="KW-0349">Heme</keyword>
<keyword id="KW-0408">Iron</keyword>
<keyword id="KW-0479">Metal-binding</keyword>
<keyword id="KW-0539">Nucleus</keyword>
<keyword id="KW-0560">Oxidoreductase</keyword>
<keyword id="KW-0561">Oxygen transport</keyword>
<keyword id="KW-1185">Reference proteome</keyword>
<keyword id="KW-0813">Transport</keyword>
<proteinExistence type="evidence at transcript level"/>
<protein>
    <recommendedName>
        <fullName evidence="12">Anaerobic nitrite reductase Hb2</fullName>
        <ecNumber evidence="3">1.7.2.-</ecNumber>
    </recommendedName>
    <alternativeName>
        <fullName evidence="11">Hemoglobin 1-2</fullName>
        <shortName evidence="11">GmGLB1-2</shortName>
    </alternativeName>
    <alternativeName>
        <fullName evidence="11">Non-symbiotic hemoglobin 1</fullName>
    </alternativeName>
    <alternativeName>
        <fullName evidence="10">Non-symbiotic hemoglobin 2</fullName>
        <shortName evidence="10">GmHb2</shortName>
    </alternativeName>
</protein>
<reference key="1">
    <citation type="journal article" date="1996" name="Proc. Natl. Acad. Sci. U.S.A.">
        <title>A new hemoglobin gene from soybean: a role for hemoglobin in all plants.</title>
        <authorList>
            <person name="Anderson C.R."/>
            <person name="Jensen E.O."/>
            <person name="Llewellyn D.J."/>
            <person name="Dennis E.S."/>
            <person name="Peacock W.J."/>
        </authorList>
    </citation>
    <scope>NUCLEOTIDE SEQUENCE [GENOMIC DNA]</scope>
    <scope>TISSUE SPECIFICITY</scope>
    <source>
        <strain>cv. Lincoln</strain>
    </source>
</reference>
<reference key="2">
    <citation type="submission" date="2009-08" db="EMBL/GenBank/DDBJ databases">
        <authorList>
            <person name="Cheung F."/>
            <person name="Xiao Y."/>
            <person name="Chan A."/>
            <person name="Moskal W."/>
            <person name="Town C.D."/>
        </authorList>
    </citation>
    <scope>NUCLEOTIDE SEQUENCE [MRNA]</scope>
</reference>
<reference key="3">
    <citation type="journal article" date="2010" name="Nature">
        <title>Genome sequence of the palaeopolyploid soybean.</title>
        <authorList>
            <person name="Schmutz J."/>
            <person name="Cannon S.B."/>
            <person name="Schlueter J."/>
            <person name="Ma J."/>
            <person name="Mitros T."/>
            <person name="Nelson W."/>
            <person name="Hyten D.L."/>
            <person name="Song Q."/>
            <person name="Thelen J.J."/>
            <person name="Cheng J."/>
            <person name="Xu D."/>
            <person name="Hellsten U."/>
            <person name="May G.D."/>
            <person name="Yu Y."/>
            <person name="Sakurai T."/>
            <person name="Umezawa T."/>
            <person name="Bhattacharyya M.K."/>
            <person name="Sandhu D."/>
            <person name="Valliyodan B."/>
            <person name="Lindquist E."/>
            <person name="Peto M."/>
            <person name="Grant D."/>
            <person name="Shu S."/>
            <person name="Goodstein D."/>
            <person name="Barry K."/>
            <person name="Futrell-Griggs M."/>
            <person name="Abernathy B."/>
            <person name="Du J."/>
            <person name="Tian Z."/>
            <person name="Zhu L."/>
            <person name="Gill N."/>
            <person name="Joshi T."/>
            <person name="Libault M."/>
            <person name="Sethuraman A."/>
            <person name="Zhang X.-C."/>
            <person name="Shinozaki K."/>
            <person name="Nguyen H.T."/>
            <person name="Wing R.A."/>
            <person name="Cregan P."/>
            <person name="Specht J."/>
            <person name="Grimwood J."/>
            <person name="Rokhsar D."/>
            <person name="Stacey G."/>
            <person name="Shoemaker R.C."/>
            <person name="Jackson S.A."/>
        </authorList>
    </citation>
    <scope>NUCLEOTIDE SEQUENCE [LARGE SCALE GENOMIC DNA]</scope>
    <source>
        <strain>cv. Williams 82</strain>
        <tissue>Callus</tissue>
    </source>
</reference>
<reference key="4">
    <citation type="journal article" date="2020" name="Ann. Bot.">
        <title>Excess nitrate induces nodule greening and reduces transcript and protein expression levels of soybean leghaemoglobins.</title>
        <authorList>
            <person name="Du M."/>
            <person name="Gao Z."/>
            <person name="Li X."/>
            <person name="Liao H."/>
        </authorList>
    </citation>
    <scope>FUNCTION</scope>
    <scope>TISSUE SPECIFICITY</scope>
    <scope>GENE FAMILY</scope>
    <scope>NOMENCLATURE</scope>
    <source>
        <strain>cv. HN66</strain>
    </source>
</reference>
<reference key="5">
    <citation type="journal article" date="2022" name="Gene">
        <title>Uncovering the roles of hemoglobins in soybean facing water stress.</title>
        <authorList>
            <person name="Koltun A."/>
            <person name="Fuhrmann-Aoyagi M.B."/>
            <person name="Cardoso Moraes L.A."/>
            <person name="Lima Nepomuceno A."/>
            <person name="Simoes Azeredo Goncalves L."/>
            <person name="Mertz-Henning L.M."/>
        </authorList>
    </citation>
    <scope>FUNCTION</scope>
    <scope>INDUCTION BY WATERLOGGING AND DROUGHT</scope>
    <scope>GENE FAMILY</scope>
    <scope>NOMENCLATURE</scope>
    <source>
        <strain>cv. BR-4</strain>
        <strain>cv. Embrapa 45</strain>
    </source>
</reference>
<sequence length="161" mass="18048">MTTTLERGFSEEQEALVVKSWNVMKKNSGELGLKFFLKIFEIAPSAQKLFSFLRDSTVPLEQNPKLKPHAVSVFVMTCDSAVQLRKAGKVTVRESNLKKLGATHFRTGVANEHFEVTKFALLETIKEAVPEMWSPAMKNAWGEAYDQLVDAIKSEMKPPSS</sequence>
<feature type="chain" id="PRO_0000460312" description="Anaerobic nitrite reductase Hb2">
    <location>
        <begin position="1"/>
        <end position="161"/>
    </location>
</feature>
<feature type="domain" description="Globin" evidence="6">
    <location>
        <begin position="8"/>
        <end position="157"/>
    </location>
</feature>
<feature type="short sequence motif" description="Homodimerization" evidence="3">
    <location>
        <begin position="41"/>
        <end position="45"/>
    </location>
</feature>
<feature type="short sequence motif" description="Homodimerization" evidence="3">
    <location>
        <begin position="111"/>
        <end position="123"/>
    </location>
</feature>
<feature type="binding site" evidence="4">
    <location>
        <position position="51"/>
    </location>
    <ligand>
        <name>heme b</name>
        <dbReference type="ChEBI" id="CHEBI:60344"/>
    </ligand>
</feature>
<feature type="binding site" evidence="3">
    <location>
        <position position="65"/>
    </location>
    <ligand>
        <name>heme b</name>
        <dbReference type="ChEBI" id="CHEBI:60344"/>
    </ligand>
</feature>
<feature type="binding site" description="distal binding residue" evidence="6">
    <location>
        <position position="69"/>
    </location>
    <ligand>
        <name>heme b</name>
        <dbReference type="ChEBI" id="CHEBI:60344"/>
    </ligand>
    <ligandPart>
        <name>Fe</name>
        <dbReference type="ChEBI" id="CHEBI:18248"/>
    </ligandPart>
</feature>
<feature type="binding site" evidence="3">
    <location>
        <position position="99"/>
    </location>
    <ligand>
        <name>heme b</name>
        <dbReference type="ChEBI" id="CHEBI:60344"/>
    </ligand>
</feature>
<feature type="binding site" evidence="3">
    <location>
        <position position="103"/>
    </location>
    <ligand>
        <name>heme b</name>
        <dbReference type="ChEBI" id="CHEBI:60344"/>
    </ligand>
</feature>
<feature type="binding site" description="proximal binding residue" evidence="6">
    <location>
        <position position="104"/>
    </location>
    <ligand>
        <name>heme b</name>
        <dbReference type="ChEBI" id="CHEBI:60344"/>
    </ligand>
    <ligandPart>
        <name>Fe</name>
        <dbReference type="ChEBI" id="CHEBI:18248"/>
    </ligandPart>
</feature>
<feature type="site" description="Homodimerization" evidence="3">
    <location>
        <position position="138"/>
    </location>
</feature>
<evidence type="ECO:0000250" key="1">
    <source>
        <dbReference type="UniProtKB" id="A2XE98"/>
    </source>
</evidence>
<evidence type="ECO:0000250" key="2">
    <source>
        <dbReference type="UniProtKB" id="I3SPW2"/>
    </source>
</evidence>
<evidence type="ECO:0000250" key="3">
    <source>
        <dbReference type="UniProtKB" id="O04986"/>
    </source>
</evidence>
<evidence type="ECO:0000250" key="4">
    <source>
        <dbReference type="UniProtKB" id="P68168"/>
    </source>
</evidence>
<evidence type="ECO:0000250" key="5">
    <source>
        <dbReference type="UniProtKB" id="Q3C1F4"/>
    </source>
</evidence>
<evidence type="ECO:0000255" key="6">
    <source>
        <dbReference type="PROSITE-ProRule" id="PRU00238"/>
    </source>
</evidence>
<evidence type="ECO:0000269" key="7">
    <source>
    </source>
</evidence>
<evidence type="ECO:0000269" key="8">
    <source>
    </source>
</evidence>
<evidence type="ECO:0000269" key="9">
    <source>
    </source>
</evidence>
<evidence type="ECO:0000303" key="10">
    <source>
    </source>
</evidence>
<evidence type="ECO:0000303" key="11">
    <source>
    </source>
</evidence>
<evidence type="ECO:0000305" key="12"/>
<evidence type="ECO:0000312" key="13">
    <source>
        <dbReference type="EMBL" id="KRH29530.1"/>
    </source>
</evidence>
<comment type="function">
    <text evidence="2 3 5 8">Phytoglobin that reduces nitrite to nitric oxide (NO) under anoxic conditions (e.g. during flooding or in waterlogged soil) and upon root nodulation (By similarity). Required for general plant development and during nodulation, especially for the onset of symbiosis (By similarity). Monitors nitric oxide (NO) levels during early phase of the nitrogen-fixing symbiosis and buffers oxygen in functioning nodules (By similarity). May not function as an oxygen storage or transport protein (By similarity). Has an unusually high affinity for O(2) through a hexacoordinate heme iron because of a very low dissociation constant (By similarity). Involved in water stress tolerance (PubMed:34737003).</text>
</comment>
<comment type="catalytic activity">
    <reaction evidence="3">
        <text>Fe(III)-heme b-[protein] + nitric oxide + H2O = Fe(II)-heme b-[protein] + nitrite + 2 H(+)</text>
        <dbReference type="Rhea" id="RHEA:77711"/>
        <dbReference type="Rhea" id="RHEA-COMP:18975"/>
        <dbReference type="Rhea" id="RHEA-COMP:18976"/>
        <dbReference type="ChEBI" id="CHEBI:15377"/>
        <dbReference type="ChEBI" id="CHEBI:15378"/>
        <dbReference type="ChEBI" id="CHEBI:16301"/>
        <dbReference type="ChEBI" id="CHEBI:16480"/>
        <dbReference type="ChEBI" id="CHEBI:55376"/>
        <dbReference type="ChEBI" id="CHEBI:60344"/>
    </reaction>
    <physiologicalReaction direction="right-to-left" evidence="3">
        <dbReference type="Rhea" id="RHEA:77713"/>
    </physiologicalReaction>
</comment>
<comment type="cofactor">
    <cofactor evidence="4">
        <name>heme b</name>
        <dbReference type="ChEBI" id="CHEBI:60344"/>
    </cofactor>
    <text evidence="4">Binds 1 heme group per subunit.</text>
</comment>
<comment type="subunit">
    <text evidence="3">Homodimer.</text>
</comment>
<comment type="subcellular location">
    <subcellularLocation>
        <location evidence="1">Cytoplasm</location>
    </subcellularLocation>
    <subcellularLocation>
        <location evidence="1">Nucleus</location>
    </subcellularLocation>
</comment>
<comment type="tissue specificity">
    <text evidence="7 9">Predominantly expressed in roots, cotyledons, stems and nodules (confined to some cells associated with the nitrogen-fixing Bradyrhizobium symbiont), and, to a lower extent, in flowers, young leaves, pods and seeds.</text>
</comment>
<comment type="induction">
    <text evidence="8">Strongly induced in roots by waterlogging, but down-regulated in leaves upon waterlogging and drought.</text>
</comment>
<comment type="similarity">
    <text evidence="12">Belongs to the plant globin family.</text>
</comment>
<name>NSHB2_SOYBN</name>
<accession>Q42785</accession>